<name>PUR7_PELPD</name>
<comment type="catalytic activity">
    <reaction evidence="1">
        <text>5-amino-1-(5-phospho-D-ribosyl)imidazole-4-carboxylate + L-aspartate + ATP = (2S)-2-[5-amino-1-(5-phospho-beta-D-ribosyl)imidazole-4-carboxamido]succinate + ADP + phosphate + 2 H(+)</text>
        <dbReference type="Rhea" id="RHEA:22628"/>
        <dbReference type="ChEBI" id="CHEBI:15378"/>
        <dbReference type="ChEBI" id="CHEBI:29991"/>
        <dbReference type="ChEBI" id="CHEBI:30616"/>
        <dbReference type="ChEBI" id="CHEBI:43474"/>
        <dbReference type="ChEBI" id="CHEBI:58443"/>
        <dbReference type="ChEBI" id="CHEBI:77657"/>
        <dbReference type="ChEBI" id="CHEBI:456216"/>
        <dbReference type="EC" id="6.3.2.6"/>
    </reaction>
</comment>
<comment type="pathway">
    <text evidence="1">Purine metabolism; IMP biosynthesis via de novo pathway; 5-amino-1-(5-phospho-D-ribosyl)imidazole-4-carboxamide from 5-amino-1-(5-phospho-D-ribosyl)imidazole-4-carboxylate: step 1/2.</text>
</comment>
<comment type="similarity">
    <text evidence="1">Belongs to the SAICAR synthetase family.</text>
</comment>
<reference key="1">
    <citation type="submission" date="2006-10" db="EMBL/GenBank/DDBJ databases">
        <title>Complete sequence of chromosome of Pelobacter propionicus DSM 2379.</title>
        <authorList>
            <consortium name="US DOE Joint Genome Institute"/>
            <person name="Copeland A."/>
            <person name="Lucas S."/>
            <person name="Lapidus A."/>
            <person name="Barry K."/>
            <person name="Detter J.C."/>
            <person name="Glavina del Rio T."/>
            <person name="Hammon N."/>
            <person name="Israni S."/>
            <person name="Dalin E."/>
            <person name="Tice H."/>
            <person name="Pitluck S."/>
            <person name="Saunders E."/>
            <person name="Brettin T."/>
            <person name="Bruce D."/>
            <person name="Han C."/>
            <person name="Tapia R."/>
            <person name="Schmutz J."/>
            <person name="Larimer F."/>
            <person name="Land M."/>
            <person name="Hauser L."/>
            <person name="Kyrpides N."/>
            <person name="Kim E."/>
            <person name="Lovley D."/>
            <person name="Richardson P."/>
        </authorList>
    </citation>
    <scope>NUCLEOTIDE SEQUENCE [LARGE SCALE GENOMIC DNA]</scope>
    <source>
        <strain>DSM 2379 / NBRC 103807 / OttBd1</strain>
    </source>
</reference>
<protein>
    <recommendedName>
        <fullName evidence="1">Phosphoribosylaminoimidazole-succinocarboxamide synthase</fullName>
        <ecNumber evidence="1">6.3.2.6</ecNumber>
    </recommendedName>
    <alternativeName>
        <fullName evidence="1">SAICAR synthetase</fullName>
    </alternativeName>
</protein>
<evidence type="ECO:0000255" key="1">
    <source>
        <dbReference type="HAMAP-Rule" id="MF_00137"/>
    </source>
</evidence>
<keyword id="KW-0067">ATP-binding</keyword>
<keyword id="KW-0436">Ligase</keyword>
<keyword id="KW-0547">Nucleotide-binding</keyword>
<keyword id="KW-0658">Purine biosynthesis</keyword>
<keyword id="KW-1185">Reference proteome</keyword>
<organism>
    <name type="scientific">Pelobacter propionicus (strain DSM 2379 / NBRC 103807 / OttBd1)</name>
    <dbReference type="NCBI Taxonomy" id="338966"/>
    <lineage>
        <taxon>Bacteria</taxon>
        <taxon>Pseudomonadati</taxon>
        <taxon>Thermodesulfobacteriota</taxon>
        <taxon>Desulfuromonadia</taxon>
        <taxon>Desulfuromonadales</taxon>
        <taxon>Desulfuromonadaceae</taxon>
        <taxon>Pelobacter</taxon>
    </lineage>
</organism>
<proteinExistence type="inferred from homology"/>
<feature type="chain" id="PRO_1000018749" description="Phosphoribosylaminoimidazole-succinocarboxamide synthase">
    <location>
        <begin position="1"/>
        <end position="296"/>
    </location>
</feature>
<accession>A1ATJ1</accession>
<sequence length="296" mass="33306">MSHPVMHTDFPGLKLLARGKVRDIYDLGETLLLVTSDRISAFDVIMNEPIPDKGFVLTEISSFWFRQMEDIVSNHIISTDVDEFPAACRPHADLLRGRSMLVKKARPLPVECIVRGYVSGSGWKEYQSSGSICGISLPPGLRESDRLPEPIFTPSTKAELGTHDENISFERMTELCGRELAEQARDYTLKIYGRARELADQKGIIIADTKFEFGVFEGELIIIDECMTPDSSRFWLKDDYRPGGPQPSFDKQFLRDYLEGLDWNKTAPAPALPAEIIAKTAQMYREALSRITGISL</sequence>
<dbReference type="EC" id="6.3.2.6" evidence="1"/>
<dbReference type="EMBL" id="CP000482">
    <property type="protein sequence ID" value="ABL00662.1"/>
    <property type="molecule type" value="Genomic_DNA"/>
</dbReference>
<dbReference type="RefSeq" id="WP_011736897.1">
    <property type="nucleotide sequence ID" value="NC_008609.1"/>
</dbReference>
<dbReference type="SMR" id="A1ATJ1"/>
<dbReference type="STRING" id="338966.Ppro_3066"/>
<dbReference type="KEGG" id="ppd:Ppro_3066"/>
<dbReference type="eggNOG" id="COG0152">
    <property type="taxonomic scope" value="Bacteria"/>
</dbReference>
<dbReference type="HOGENOM" id="CLU_045637_0_0_7"/>
<dbReference type="OrthoDB" id="9801549at2"/>
<dbReference type="UniPathway" id="UPA00074">
    <property type="reaction ID" value="UER00131"/>
</dbReference>
<dbReference type="Proteomes" id="UP000006732">
    <property type="component" value="Chromosome"/>
</dbReference>
<dbReference type="GO" id="GO:0005737">
    <property type="term" value="C:cytoplasm"/>
    <property type="evidence" value="ECO:0007669"/>
    <property type="project" value="TreeGrafter"/>
</dbReference>
<dbReference type="GO" id="GO:0005524">
    <property type="term" value="F:ATP binding"/>
    <property type="evidence" value="ECO:0007669"/>
    <property type="project" value="UniProtKB-KW"/>
</dbReference>
<dbReference type="GO" id="GO:0004639">
    <property type="term" value="F:phosphoribosylaminoimidazolesuccinocarboxamide synthase activity"/>
    <property type="evidence" value="ECO:0007669"/>
    <property type="project" value="UniProtKB-UniRule"/>
</dbReference>
<dbReference type="GO" id="GO:0006189">
    <property type="term" value="P:'de novo' IMP biosynthetic process"/>
    <property type="evidence" value="ECO:0007669"/>
    <property type="project" value="UniProtKB-UniRule"/>
</dbReference>
<dbReference type="CDD" id="cd01414">
    <property type="entry name" value="SAICAR_synt_Sc"/>
    <property type="match status" value="1"/>
</dbReference>
<dbReference type="FunFam" id="3.30.470.20:FF:000015">
    <property type="entry name" value="Phosphoribosylaminoimidazole-succinocarboxamide synthase"/>
    <property type="match status" value="1"/>
</dbReference>
<dbReference type="Gene3D" id="3.30.470.20">
    <property type="entry name" value="ATP-grasp fold, B domain"/>
    <property type="match status" value="1"/>
</dbReference>
<dbReference type="Gene3D" id="3.30.200.20">
    <property type="entry name" value="Phosphorylase Kinase, domain 1"/>
    <property type="match status" value="1"/>
</dbReference>
<dbReference type="HAMAP" id="MF_00137">
    <property type="entry name" value="SAICAR_synth"/>
    <property type="match status" value="1"/>
</dbReference>
<dbReference type="InterPro" id="IPR028923">
    <property type="entry name" value="SAICAR_synt/ADE2_N"/>
</dbReference>
<dbReference type="InterPro" id="IPR001636">
    <property type="entry name" value="SAICAR_synth"/>
</dbReference>
<dbReference type="InterPro" id="IPR018236">
    <property type="entry name" value="SAICAR_synthetase_CS"/>
</dbReference>
<dbReference type="NCBIfam" id="NF010568">
    <property type="entry name" value="PRK13961.1"/>
    <property type="match status" value="1"/>
</dbReference>
<dbReference type="NCBIfam" id="TIGR00081">
    <property type="entry name" value="purC"/>
    <property type="match status" value="1"/>
</dbReference>
<dbReference type="PANTHER" id="PTHR43700">
    <property type="entry name" value="PHOSPHORIBOSYLAMINOIMIDAZOLE-SUCCINOCARBOXAMIDE SYNTHASE"/>
    <property type="match status" value="1"/>
</dbReference>
<dbReference type="PANTHER" id="PTHR43700:SF1">
    <property type="entry name" value="PHOSPHORIBOSYLAMINOIMIDAZOLE-SUCCINOCARBOXAMIDE SYNTHASE"/>
    <property type="match status" value="1"/>
</dbReference>
<dbReference type="Pfam" id="PF01259">
    <property type="entry name" value="SAICAR_synt"/>
    <property type="match status" value="1"/>
</dbReference>
<dbReference type="SUPFAM" id="SSF56104">
    <property type="entry name" value="SAICAR synthase-like"/>
    <property type="match status" value="1"/>
</dbReference>
<dbReference type="PROSITE" id="PS01057">
    <property type="entry name" value="SAICAR_SYNTHETASE_1"/>
    <property type="match status" value="1"/>
</dbReference>
<dbReference type="PROSITE" id="PS01058">
    <property type="entry name" value="SAICAR_SYNTHETASE_2"/>
    <property type="match status" value="1"/>
</dbReference>
<gene>
    <name evidence="1" type="primary">purC</name>
    <name type="ordered locus">Ppro_3066</name>
</gene>